<proteinExistence type="inferred from homology"/>
<feature type="chain" id="PRO_0000126468" description="Small ribosomal subunit protein uS8">
    <location>
        <begin position="1"/>
        <end position="130"/>
    </location>
</feature>
<keyword id="KW-1185">Reference proteome</keyword>
<keyword id="KW-0687">Ribonucleoprotein</keyword>
<keyword id="KW-0689">Ribosomal protein</keyword>
<keyword id="KW-0694">RNA-binding</keyword>
<keyword id="KW-0699">rRNA-binding</keyword>
<evidence type="ECO:0000255" key="1">
    <source>
        <dbReference type="HAMAP-Rule" id="MF_01302"/>
    </source>
</evidence>
<evidence type="ECO:0000305" key="2"/>
<name>RS8_PSESM</name>
<organism>
    <name type="scientific">Pseudomonas syringae pv. tomato (strain ATCC BAA-871 / DC3000)</name>
    <dbReference type="NCBI Taxonomy" id="223283"/>
    <lineage>
        <taxon>Bacteria</taxon>
        <taxon>Pseudomonadati</taxon>
        <taxon>Pseudomonadota</taxon>
        <taxon>Gammaproteobacteria</taxon>
        <taxon>Pseudomonadales</taxon>
        <taxon>Pseudomonadaceae</taxon>
        <taxon>Pseudomonas</taxon>
    </lineage>
</organism>
<dbReference type="EMBL" id="AE016853">
    <property type="protein sequence ID" value="AAO54182.1"/>
    <property type="molecule type" value="Genomic_DNA"/>
</dbReference>
<dbReference type="RefSeq" id="NP_790487.1">
    <property type="nucleotide sequence ID" value="NC_004578.1"/>
</dbReference>
<dbReference type="RefSeq" id="WP_002555475.1">
    <property type="nucleotide sequence ID" value="NC_004578.1"/>
</dbReference>
<dbReference type="SMR" id="Q889V7"/>
<dbReference type="STRING" id="223283.PSPTO_0640"/>
<dbReference type="GeneID" id="96221016"/>
<dbReference type="KEGG" id="pst:PSPTO_0640"/>
<dbReference type="PATRIC" id="fig|223283.9.peg.646"/>
<dbReference type="eggNOG" id="COG0096">
    <property type="taxonomic scope" value="Bacteria"/>
</dbReference>
<dbReference type="HOGENOM" id="CLU_098428_0_0_6"/>
<dbReference type="OrthoDB" id="9802617at2"/>
<dbReference type="PhylomeDB" id="Q889V7"/>
<dbReference type="Proteomes" id="UP000002515">
    <property type="component" value="Chromosome"/>
</dbReference>
<dbReference type="GO" id="GO:1990904">
    <property type="term" value="C:ribonucleoprotein complex"/>
    <property type="evidence" value="ECO:0007669"/>
    <property type="project" value="UniProtKB-KW"/>
</dbReference>
<dbReference type="GO" id="GO:0005840">
    <property type="term" value="C:ribosome"/>
    <property type="evidence" value="ECO:0007669"/>
    <property type="project" value="UniProtKB-KW"/>
</dbReference>
<dbReference type="GO" id="GO:0019843">
    <property type="term" value="F:rRNA binding"/>
    <property type="evidence" value="ECO:0007669"/>
    <property type="project" value="UniProtKB-UniRule"/>
</dbReference>
<dbReference type="GO" id="GO:0003735">
    <property type="term" value="F:structural constituent of ribosome"/>
    <property type="evidence" value="ECO:0007669"/>
    <property type="project" value="InterPro"/>
</dbReference>
<dbReference type="GO" id="GO:0006412">
    <property type="term" value="P:translation"/>
    <property type="evidence" value="ECO:0007669"/>
    <property type="project" value="UniProtKB-UniRule"/>
</dbReference>
<dbReference type="FunFam" id="3.30.1370.30:FF:000002">
    <property type="entry name" value="30S ribosomal protein S8"/>
    <property type="match status" value="1"/>
</dbReference>
<dbReference type="FunFam" id="3.30.1490.10:FF:000001">
    <property type="entry name" value="30S ribosomal protein S8"/>
    <property type="match status" value="1"/>
</dbReference>
<dbReference type="Gene3D" id="3.30.1370.30">
    <property type="match status" value="1"/>
</dbReference>
<dbReference type="Gene3D" id="3.30.1490.10">
    <property type="match status" value="1"/>
</dbReference>
<dbReference type="HAMAP" id="MF_01302_B">
    <property type="entry name" value="Ribosomal_uS8_B"/>
    <property type="match status" value="1"/>
</dbReference>
<dbReference type="InterPro" id="IPR000630">
    <property type="entry name" value="Ribosomal_uS8"/>
</dbReference>
<dbReference type="InterPro" id="IPR047863">
    <property type="entry name" value="Ribosomal_uS8_CS"/>
</dbReference>
<dbReference type="InterPro" id="IPR035987">
    <property type="entry name" value="Ribosomal_uS8_sf"/>
</dbReference>
<dbReference type="NCBIfam" id="NF001109">
    <property type="entry name" value="PRK00136.1"/>
    <property type="match status" value="1"/>
</dbReference>
<dbReference type="PANTHER" id="PTHR11758">
    <property type="entry name" value="40S RIBOSOMAL PROTEIN S15A"/>
    <property type="match status" value="1"/>
</dbReference>
<dbReference type="Pfam" id="PF00410">
    <property type="entry name" value="Ribosomal_S8"/>
    <property type="match status" value="1"/>
</dbReference>
<dbReference type="SUPFAM" id="SSF56047">
    <property type="entry name" value="Ribosomal protein S8"/>
    <property type="match status" value="1"/>
</dbReference>
<dbReference type="PROSITE" id="PS00053">
    <property type="entry name" value="RIBOSOMAL_S8"/>
    <property type="match status" value="1"/>
</dbReference>
<comment type="function">
    <text evidence="1">One of the primary rRNA binding proteins, it binds directly to 16S rRNA central domain where it helps coordinate assembly of the platform of the 30S subunit.</text>
</comment>
<comment type="subunit">
    <text evidence="1">Part of the 30S ribosomal subunit. Contacts proteins S5 and S12.</text>
</comment>
<comment type="similarity">
    <text evidence="1">Belongs to the universal ribosomal protein uS8 family.</text>
</comment>
<reference key="1">
    <citation type="journal article" date="2003" name="Proc. Natl. Acad. Sci. U.S.A.">
        <title>The complete genome sequence of the Arabidopsis and tomato pathogen Pseudomonas syringae pv. tomato DC3000.</title>
        <authorList>
            <person name="Buell C.R."/>
            <person name="Joardar V."/>
            <person name="Lindeberg M."/>
            <person name="Selengut J."/>
            <person name="Paulsen I.T."/>
            <person name="Gwinn M.L."/>
            <person name="Dodson R.J."/>
            <person name="DeBoy R.T."/>
            <person name="Durkin A.S."/>
            <person name="Kolonay J.F."/>
            <person name="Madupu R."/>
            <person name="Daugherty S.C."/>
            <person name="Brinkac L.M."/>
            <person name="Beanan M.J."/>
            <person name="Haft D.H."/>
            <person name="Nelson W.C."/>
            <person name="Davidsen T.M."/>
            <person name="Zafar N."/>
            <person name="Zhou L."/>
            <person name="Liu J."/>
            <person name="Yuan Q."/>
            <person name="Khouri H.M."/>
            <person name="Fedorova N.B."/>
            <person name="Tran B."/>
            <person name="Russell D."/>
            <person name="Berry K.J."/>
            <person name="Utterback T.R."/>
            <person name="Van Aken S.E."/>
            <person name="Feldblyum T.V."/>
            <person name="D'Ascenzo M."/>
            <person name="Deng W.-L."/>
            <person name="Ramos A.R."/>
            <person name="Alfano J.R."/>
            <person name="Cartinhour S."/>
            <person name="Chatterjee A.K."/>
            <person name="Delaney T.P."/>
            <person name="Lazarowitz S.G."/>
            <person name="Martin G.B."/>
            <person name="Schneider D.J."/>
            <person name="Tang X."/>
            <person name="Bender C.L."/>
            <person name="White O."/>
            <person name="Fraser C.M."/>
            <person name="Collmer A."/>
        </authorList>
    </citation>
    <scope>NUCLEOTIDE SEQUENCE [LARGE SCALE GENOMIC DNA]</scope>
    <source>
        <strain>ATCC BAA-871 / DC3000</strain>
    </source>
</reference>
<protein>
    <recommendedName>
        <fullName evidence="1">Small ribosomal subunit protein uS8</fullName>
    </recommendedName>
    <alternativeName>
        <fullName evidence="2">30S ribosomal protein S8</fullName>
    </alternativeName>
</protein>
<gene>
    <name evidence="1" type="primary">rpsH</name>
    <name type="ordered locus">PSPTO_0640</name>
</gene>
<sequence length="130" mass="14022">MSMQDPLADMLTRIRNAQMAEKPVVSMPSSTLKVAVAKVLKDEGYIAGYQISSEVKSSLSIELKYFEGRPVIEEVKRVSRPGLRQYKSSDDLPKVRGGLGVSIVSTSKGVMTDRAARAAGVGGEVLCTVF</sequence>
<accession>Q889V7</accession>